<accession>Q8UVX8</accession>
<proteinExistence type="evidence at transcript level"/>
<name>IOD2_NEOFS</name>
<protein>
    <recommendedName>
        <fullName>Type II iodothyronine deiodinase</fullName>
        <ecNumber evidence="1">1.21.99.4</ecNumber>
    </recommendedName>
    <alternativeName>
        <fullName>5DII</fullName>
    </alternativeName>
    <alternativeName>
        <fullName>DIOII</fullName>
    </alternativeName>
    <alternativeName>
        <fullName>Type 2 DI</fullName>
    </alternativeName>
    <alternativeName>
        <fullName>Type-II 5'-deiodinase</fullName>
    </alternativeName>
</protein>
<gene>
    <name type="primary">dio2</name>
</gene>
<feature type="chain" id="PRO_0000318643" description="Type II iodothyronine deiodinase">
    <location>
        <begin position="1"/>
        <end position="269"/>
    </location>
</feature>
<feature type="topological domain" description="Lumenal" evidence="1">
    <location>
        <begin position="1"/>
        <end position="7"/>
    </location>
</feature>
<feature type="transmembrane region" description="Helical; Signal-anchor for type III membrane protein" evidence="3">
    <location>
        <begin position="8"/>
        <end position="28"/>
    </location>
</feature>
<feature type="topological domain" description="Cytoplasmic" evidence="1">
    <location>
        <begin position="29"/>
        <end position="269"/>
    </location>
</feature>
<feature type="active site" evidence="1">
    <location>
        <position position="128"/>
    </location>
</feature>
<feature type="non-standard amino acid" description="Selenocysteine" evidence="1">
    <location>
        <position position="128"/>
    </location>
</feature>
<feature type="non-standard amino acid" description="Selenocysteine" evidence="1">
    <location>
        <position position="261"/>
    </location>
</feature>
<comment type="function">
    <text evidence="1 2">Plays a crucial role in the metabolism of thyroid hormones (TH) and has specific roles in TH activation and inactivation by deiodination (By similarity). Catalyzes the deiodination of L-thyroxine (T4) to 3,5,3'-triiodothyronine (T3), 3,3',5'-triiodothyronine (rT3) to 3,3'-diiodothyronine (3,3'-T2) and 3',5'-diiodothyronine (3',5'-T2) to 3'-monoiodothyronine (3'-T1) via outer-ring deiodination (ORD) (By similarity). Catalyzes the phenolic ring deiodinations of 3,3',5'-triiodothyronamine and 3',5'- diiodothyronamine (By similarity).</text>
</comment>
<comment type="catalytic activity">
    <reaction evidence="4">
        <text>3,3',5-triiodo-L-thyronine + iodide + A + H(+) = L-thyroxine + AH2</text>
        <dbReference type="Rhea" id="RHEA:19745"/>
        <dbReference type="ChEBI" id="CHEBI:13193"/>
        <dbReference type="ChEBI" id="CHEBI:15378"/>
        <dbReference type="ChEBI" id="CHEBI:16382"/>
        <dbReference type="ChEBI" id="CHEBI:17499"/>
        <dbReference type="ChEBI" id="CHEBI:58448"/>
        <dbReference type="ChEBI" id="CHEBI:533015"/>
        <dbReference type="EC" id="1.21.99.4"/>
    </reaction>
    <physiologicalReaction direction="right-to-left" evidence="1">
        <dbReference type="Rhea" id="RHEA:19747"/>
    </physiologicalReaction>
</comment>
<comment type="catalytic activity">
    <reaction evidence="2">
        <text>3,3'-diiodo-L-thyronine + iodide + A + H(+) = 3,3',5'-triiodo-L-thyronine + AH2</text>
        <dbReference type="Rhea" id="RHEA:82575"/>
        <dbReference type="ChEBI" id="CHEBI:13193"/>
        <dbReference type="ChEBI" id="CHEBI:15378"/>
        <dbReference type="ChEBI" id="CHEBI:16382"/>
        <dbReference type="ChEBI" id="CHEBI:17499"/>
        <dbReference type="ChEBI" id="CHEBI:57261"/>
        <dbReference type="ChEBI" id="CHEBI:176514"/>
    </reaction>
    <physiologicalReaction direction="right-to-left" evidence="2">
        <dbReference type="Rhea" id="RHEA:82577"/>
    </physiologicalReaction>
</comment>
<comment type="catalytic activity">
    <reaction evidence="1">
        <text>3'-iodo-L-thyronine + iodide + A + H(+) = 3',5'-diiodo-L-thyronine + AH2</text>
        <dbReference type="Rhea" id="RHEA:82899"/>
        <dbReference type="ChEBI" id="CHEBI:13193"/>
        <dbReference type="ChEBI" id="CHEBI:15378"/>
        <dbReference type="ChEBI" id="CHEBI:16382"/>
        <dbReference type="ChEBI" id="CHEBI:17499"/>
        <dbReference type="ChEBI" id="CHEBI:195762"/>
        <dbReference type="ChEBI" id="CHEBI:232695"/>
    </reaction>
    <physiologicalReaction direction="right-to-left" evidence="1">
        <dbReference type="Rhea" id="RHEA:82901"/>
    </physiologicalReaction>
</comment>
<comment type="catalytic activity">
    <reaction evidence="1">
        <text>3,3'-diiodothyronamine + iodide + A + H(+) = 3,3',5'-triiodothyronamine + AH2</text>
        <dbReference type="Rhea" id="RHEA:83795"/>
        <dbReference type="ChEBI" id="CHEBI:13193"/>
        <dbReference type="ChEBI" id="CHEBI:15378"/>
        <dbReference type="ChEBI" id="CHEBI:16382"/>
        <dbReference type="ChEBI" id="CHEBI:17499"/>
        <dbReference type="ChEBI" id="CHEBI:233341"/>
        <dbReference type="ChEBI" id="CHEBI:233343"/>
    </reaction>
    <physiologicalReaction direction="right-to-left" evidence="1">
        <dbReference type="Rhea" id="RHEA:83797"/>
    </physiologicalReaction>
</comment>
<comment type="catalytic activity">
    <reaction evidence="1">
        <text>3'-iodothyronamine + iodide + A + H(+) = 3',5'-diiodothyronamine + AH2</text>
        <dbReference type="Rhea" id="RHEA:83803"/>
        <dbReference type="ChEBI" id="CHEBI:13193"/>
        <dbReference type="ChEBI" id="CHEBI:15378"/>
        <dbReference type="ChEBI" id="CHEBI:16382"/>
        <dbReference type="ChEBI" id="CHEBI:17499"/>
        <dbReference type="ChEBI" id="CHEBI:233339"/>
        <dbReference type="ChEBI" id="CHEBI:233342"/>
    </reaction>
    <physiologicalReaction direction="right-to-left" evidence="1">
        <dbReference type="Rhea" id="RHEA:83805"/>
    </physiologicalReaction>
</comment>
<comment type="subunit">
    <text evidence="1">Predominantly monomer. Can form homodimers but homodimerization is not essential for enzyme activity.</text>
</comment>
<comment type="subcellular location">
    <subcellularLocation>
        <location evidence="1">Endoplasmic reticulum membrane</location>
        <topology evidence="1">Single-pass type III membrane protein</topology>
    </subcellularLocation>
</comment>
<comment type="similarity">
    <text evidence="5">Belongs to the iodothyronine deiodinase family.</text>
</comment>
<evidence type="ECO:0000250" key="1">
    <source>
        <dbReference type="UniProtKB" id="Q92813"/>
    </source>
</evidence>
<evidence type="ECO:0000250" key="2">
    <source>
        <dbReference type="UniProtKB" id="Q9Z1Y9"/>
    </source>
</evidence>
<evidence type="ECO:0000255" key="3"/>
<evidence type="ECO:0000255" key="4">
    <source>
        <dbReference type="PROSITE-ProRule" id="PRU10107"/>
    </source>
</evidence>
<evidence type="ECO:0000305" key="5"/>
<dbReference type="EC" id="1.21.99.4" evidence="1"/>
<dbReference type="EMBL" id="AF327438">
    <property type="protein sequence ID" value="AAL56981.2"/>
    <property type="molecule type" value="mRNA"/>
</dbReference>
<dbReference type="GO" id="GO:0005789">
    <property type="term" value="C:endoplasmic reticulum membrane"/>
    <property type="evidence" value="ECO:0000250"/>
    <property type="project" value="UniProtKB"/>
</dbReference>
<dbReference type="GO" id="GO:0004800">
    <property type="term" value="F:thyroxine 5'-deiodinase activity"/>
    <property type="evidence" value="ECO:0000250"/>
    <property type="project" value="UniProtKB"/>
</dbReference>
<dbReference type="GO" id="GO:0042446">
    <property type="term" value="P:hormone biosynthetic process"/>
    <property type="evidence" value="ECO:0007669"/>
    <property type="project" value="UniProtKB-KW"/>
</dbReference>
<dbReference type="GO" id="GO:0042403">
    <property type="term" value="P:thyroid hormone metabolic process"/>
    <property type="evidence" value="ECO:0000250"/>
    <property type="project" value="UniProtKB"/>
</dbReference>
<dbReference type="FunFam" id="3.40.30.10:FF:000194">
    <property type="entry name" value="Iodothyronine deiodinase"/>
    <property type="match status" value="1"/>
</dbReference>
<dbReference type="Gene3D" id="3.40.30.10">
    <property type="entry name" value="Glutaredoxin"/>
    <property type="match status" value="1"/>
</dbReference>
<dbReference type="InterPro" id="IPR000643">
    <property type="entry name" value="Iodothyronine_deiodinase"/>
</dbReference>
<dbReference type="InterPro" id="IPR008261">
    <property type="entry name" value="Iodothyronine_deiodinase_AS"/>
</dbReference>
<dbReference type="InterPro" id="IPR036249">
    <property type="entry name" value="Thioredoxin-like_sf"/>
</dbReference>
<dbReference type="PANTHER" id="PTHR11781">
    <property type="entry name" value="IODOTHYRONINE DEIODINASE"/>
    <property type="match status" value="1"/>
</dbReference>
<dbReference type="PANTHER" id="PTHR11781:SF20">
    <property type="entry name" value="TYPE II IODOTHYRONINE DEIODINASE"/>
    <property type="match status" value="1"/>
</dbReference>
<dbReference type="Pfam" id="PF00837">
    <property type="entry name" value="T4_deiodinase"/>
    <property type="match status" value="1"/>
</dbReference>
<dbReference type="PIRSF" id="PIRSF001330">
    <property type="entry name" value="IOD"/>
    <property type="match status" value="1"/>
</dbReference>
<dbReference type="SUPFAM" id="SSF52833">
    <property type="entry name" value="Thioredoxin-like"/>
    <property type="match status" value="1"/>
</dbReference>
<dbReference type="PROSITE" id="PS01205">
    <property type="entry name" value="T4_DEIODINASE"/>
    <property type="match status" value="1"/>
</dbReference>
<keyword id="KW-0256">Endoplasmic reticulum</keyword>
<keyword id="KW-0472">Membrane</keyword>
<keyword id="KW-0560">Oxidoreductase</keyword>
<keyword id="KW-0712">Selenocysteine</keyword>
<keyword id="KW-0893">Thyroid hormones biosynthesis</keyword>
<keyword id="KW-0812">Transmembrane</keyword>
<keyword id="KW-1133">Transmembrane helix</keyword>
<sequence length="269" mass="30513">MGLLSVDLLITLQILPWFFSNCLFLALYDSVVLLKHVILLLSCSKSSRGEWRRMLTSEGLRTVWNSFLLDAYKQVKLGGDAPNSKVVRVTSGCCRRRSFSGKGESECHLLDFASSNRPLVVNFGSATUPPFISQLPTFRKLVEEFSDVADFLLVYIDEAHPADGWAAPGVATKSFEVKKHRSQEERCVAAHKLLEHFSLPPQCQVVADCMDNNTNVAYGVSFERVCIVQRQKIAYLGGKGPFFYNLKEVRHWLEQTYRKRUVPTCELIM</sequence>
<organism>
    <name type="scientific">Neoceratodus forsteri</name>
    <name type="common">Australian lungfish</name>
    <name type="synonym">Ceratodus forsteri</name>
    <dbReference type="NCBI Taxonomy" id="7892"/>
    <lineage>
        <taxon>Eukaryota</taxon>
        <taxon>Metazoa</taxon>
        <taxon>Chordata</taxon>
        <taxon>Craniata</taxon>
        <taxon>Vertebrata</taxon>
        <taxon>Euteleostomi</taxon>
        <taxon>Dipnomorpha</taxon>
        <taxon>Ceratodontiformes</taxon>
        <taxon>Ceratodontoidei</taxon>
        <taxon>Ceratodontidae</taxon>
        <taxon>Neoceratodus</taxon>
    </lineage>
</organism>
<reference key="1">
    <citation type="journal article" date="2003" name="Gen. Comp. Endocrinol.">
        <title>Deiodinase type II and tissue specific mRNA alternative splicing in the Australian lungfish, Neoceratodus forsteri.</title>
        <authorList>
            <person name="Sutija M."/>
            <person name="Longhurst T.J."/>
            <person name="Joss J.M."/>
        </authorList>
    </citation>
    <scope>NUCLEOTIDE SEQUENCE [MRNA]</scope>
    <source>
        <tissue>Liver</tissue>
    </source>
</reference>